<reference key="1">
    <citation type="journal article" date="2013" name="Stand. Genomic Sci.">
        <title>Complete genome sequence of Arthrobacter sp. strain FB24.</title>
        <authorList>
            <person name="Nakatsu C.H."/>
            <person name="Barabote R."/>
            <person name="Thompson S."/>
            <person name="Bruce D."/>
            <person name="Detter C."/>
            <person name="Brettin T."/>
            <person name="Han C."/>
            <person name="Beasley F."/>
            <person name="Chen W."/>
            <person name="Konopka A."/>
            <person name="Xie G."/>
        </authorList>
    </citation>
    <scope>NUCLEOTIDE SEQUENCE [LARGE SCALE GENOMIC DNA]</scope>
    <source>
        <strain>FB24</strain>
    </source>
</reference>
<accession>A0JUP1</accession>
<name>RS2_ARTS2</name>
<gene>
    <name evidence="1" type="primary">rpsB</name>
    <name type="ordered locus">Arth_1367</name>
</gene>
<comment type="similarity">
    <text evidence="1">Belongs to the universal ribosomal protein uS2 family.</text>
</comment>
<sequence>MPVVTMRQLLDSGVHFGHQTRRWNPKMKRFIFTERNGIYIIDLQQSLSYIDRAYEFVKATVAHGGTVLFVGTKKQAQESIAEQATRVGQPYVNQRWLGGMLTNFQTVSKRIQRMKELEEIDFDDVAGSAYTKKELLLLRRELTKLETNLGGIRNLTKAPSVLWIVDTKKEHLAVDEAKKLNIPVVAILDTNCDPDEVDFPIPGNDDAIRSVNLLTRVVADAVAEGLIARNQRATGTTEAPEEPLAEWERELLEGSKSEEAAAPAAAEEAPAAAEEAPAAAEATESAAGEADAAK</sequence>
<organism>
    <name type="scientific">Arthrobacter sp. (strain FB24)</name>
    <dbReference type="NCBI Taxonomy" id="290399"/>
    <lineage>
        <taxon>Bacteria</taxon>
        <taxon>Bacillati</taxon>
        <taxon>Actinomycetota</taxon>
        <taxon>Actinomycetes</taxon>
        <taxon>Micrococcales</taxon>
        <taxon>Micrococcaceae</taxon>
        <taxon>Arthrobacter</taxon>
    </lineage>
</organism>
<evidence type="ECO:0000255" key="1">
    <source>
        <dbReference type="HAMAP-Rule" id="MF_00291"/>
    </source>
</evidence>
<evidence type="ECO:0000256" key="2">
    <source>
        <dbReference type="SAM" id="MobiDB-lite"/>
    </source>
</evidence>
<evidence type="ECO:0000305" key="3"/>
<dbReference type="EMBL" id="CP000454">
    <property type="protein sequence ID" value="ABK02761.1"/>
    <property type="molecule type" value="Genomic_DNA"/>
</dbReference>
<dbReference type="RefSeq" id="WP_011691228.1">
    <property type="nucleotide sequence ID" value="NC_008541.1"/>
</dbReference>
<dbReference type="SMR" id="A0JUP1"/>
<dbReference type="STRING" id="290399.Arth_1367"/>
<dbReference type="KEGG" id="art:Arth_1367"/>
<dbReference type="eggNOG" id="COG0052">
    <property type="taxonomic scope" value="Bacteria"/>
</dbReference>
<dbReference type="HOGENOM" id="CLU_040318_2_3_11"/>
<dbReference type="OrthoDB" id="9808036at2"/>
<dbReference type="Proteomes" id="UP000000754">
    <property type="component" value="Chromosome"/>
</dbReference>
<dbReference type="GO" id="GO:0022627">
    <property type="term" value="C:cytosolic small ribosomal subunit"/>
    <property type="evidence" value="ECO:0007669"/>
    <property type="project" value="TreeGrafter"/>
</dbReference>
<dbReference type="GO" id="GO:0003735">
    <property type="term" value="F:structural constituent of ribosome"/>
    <property type="evidence" value="ECO:0007669"/>
    <property type="project" value="InterPro"/>
</dbReference>
<dbReference type="GO" id="GO:0006412">
    <property type="term" value="P:translation"/>
    <property type="evidence" value="ECO:0007669"/>
    <property type="project" value="UniProtKB-UniRule"/>
</dbReference>
<dbReference type="CDD" id="cd01425">
    <property type="entry name" value="RPS2"/>
    <property type="match status" value="1"/>
</dbReference>
<dbReference type="FunFam" id="1.10.287.610:FF:000001">
    <property type="entry name" value="30S ribosomal protein S2"/>
    <property type="match status" value="1"/>
</dbReference>
<dbReference type="Gene3D" id="3.40.50.10490">
    <property type="entry name" value="Glucose-6-phosphate isomerase like protein, domain 1"/>
    <property type="match status" value="1"/>
</dbReference>
<dbReference type="Gene3D" id="1.10.287.610">
    <property type="entry name" value="Helix hairpin bin"/>
    <property type="match status" value="1"/>
</dbReference>
<dbReference type="HAMAP" id="MF_00291_B">
    <property type="entry name" value="Ribosomal_uS2_B"/>
    <property type="match status" value="1"/>
</dbReference>
<dbReference type="InterPro" id="IPR001865">
    <property type="entry name" value="Ribosomal_uS2"/>
</dbReference>
<dbReference type="InterPro" id="IPR005706">
    <property type="entry name" value="Ribosomal_uS2_bac/mit/plastid"/>
</dbReference>
<dbReference type="InterPro" id="IPR018130">
    <property type="entry name" value="Ribosomal_uS2_CS"/>
</dbReference>
<dbReference type="InterPro" id="IPR023591">
    <property type="entry name" value="Ribosomal_uS2_flav_dom_sf"/>
</dbReference>
<dbReference type="NCBIfam" id="TIGR01011">
    <property type="entry name" value="rpsB_bact"/>
    <property type="match status" value="1"/>
</dbReference>
<dbReference type="PANTHER" id="PTHR12534">
    <property type="entry name" value="30S RIBOSOMAL PROTEIN S2 PROKARYOTIC AND ORGANELLAR"/>
    <property type="match status" value="1"/>
</dbReference>
<dbReference type="PANTHER" id="PTHR12534:SF0">
    <property type="entry name" value="SMALL RIBOSOMAL SUBUNIT PROTEIN US2M"/>
    <property type="match status" value="1"/>
</dbReference>
<dbReference type="Pfam" id="PF00318">
    <property type="entry name" value="Ribosomal_S2"/>
    <property type="match status" value="1"/>
</dbReference>
<dbReference type="PRINTS" id="PR00395">
    <property type="entry name" value="RIBOSOMALS2"/>
</dbReference>
<dbReference type="SUPFAM" id="SSF52313">
    <property type="entry name" value="Ribosomal protein S2"/>
    <property type="match status" value="1"/>
</dbReference>
<dbReference type="PROSITE" id="PS00962">
    <property type="entry name" value="RIBOSOMAL_S2_1"/>
    <property type="match status" value="1"/>
</dbReference>
<proteinExistence type="inferred from homology"/>
<protein>
    <recommendedName>
        <fullName evidence="1">Small ribosomal subunit protein uS2</fullName>
    </recommendedName>
    <alternativeName>
        <fullName evidence="3">30S ribosomal protein S2</fullName>
    </alternativeName>
</protein>
<feature type="chain" id="PRO_1000003887" description="Small ribosomal subunit protein uS2">
    <location>
        <begin position="1"/>
        <end position="294"/>
    </location>
</feature>
<feature type="region of interest" description="Disordered" evidence="2">
    <location>
        <begin position="232"/>
        <end position="294"/>
    </location>
</feature>
<feature type="compositionally biased region" description="Basic and acidic residues" evidence="2">
    <location>
        <begin position="246"/>
        <end position="259"/>
    </location>
</feature>
<feature type="compositionally biased region" description="Low complexity" evidence="2">
    <location>
        <begin position="260"/>
        <end position="294"/>
    </location>
</feature>
<keyword id="KW-1185">Reference proteome</keyword>
<keyword id="KW-0687">Ribonucleoprotein</keyword>
<keyword id="KW-0689">Ribosomal protein</keyword>